<reference key="1">
    <citation type="submission" date="2008-08" db="EMBL/GenBank/DDBJ databases">
        <title>Complete sequence of Anaeromyxobacter sp. K.</title>
        <authorList>
            <consortium name="US DOE Joint Genome Institute"/>
            <person name="Lucas S."/>
            <person name="Copeland A."/>
            <person name="Lapidus A."/>
            <person name="Glavina del Rio T."/>
            <person name="Dalin E."/>
            <person name="Tice H."/>
            <person name="Bruce D."/>
            <person name="Goodwin L."/>
            <person name="Pitluck S."/>
            <person name="Saunders E."/>
            <person name="Brettin T."/>
            <person name="Detter J.C."/>
            <person name="Han C."/>
            <person name="Larimer F."/>
            <person name="Land M."/>
            <person name="Hauser L."/>
            <person name="Kyrpides N."/>
            <person name="Ovchinnikiva G."/>
            <person name="Beliaev A."/>
        </authorList>
    </citation>
    <scope>NUCLEOTIDE SEQUENCE [LARGE SCALE GENOMIC DNA]</scope>
    <source>
        <strain>K</strain>
    </source>
</reference>
<protein>
    <recommendedName>
        <fullName evidence="1">4-hydroxy-tetrahydrodipicolinate synthase</fullName>
        <shortName evidence="1">HTPA synthase</shortName>
        <ecNumber evidence="1">4.3.3.7</ecNumber>
    </recommendedName>
</protein>
<sequence>MRRLEGSMVAIVTPMKDGAVDLRALRELAEWQLAEGTDGIVPCGTTGEGVTLTPAERADVIRTVIETVRGRALVIAGAGSNATHEAIESVKLAKTLGADAALVVTPYYNKPTQEGLFRHYQAIWEATRFPVVAYNVPSRTSVDLLPETVARLAKAGAIAGIKEATANMDRQVQLVEKVGKDAIAYLSGDDFTVLPYVACGGHGVISVIANIAPRAMKELVVAARSGDLAGALAKQAAMAELNRMMFVETNPGPVKAAVALLGRSGGELRLPLAPVSEASLAKVRDAMVRFGLKLA</sequence>
<evidence type="ECO:0000255" key="1">
    <source>
        <dbReference type="HAMAP-Rule" id="MF_00418"/>
    </source>
</evidence>
<evidence type="ECO:0000305" key="2"/>
<keyword id="KW-0028">Amino-acid biosynthesis</keyword>
<keyword id="KW-0963">Cytoplasm</keyword>
<keyword id="KW-0220">Diaminopimelate biosynthesis</keyword>
<keyword id="KW-0456">Lyase</keyword>
<keyword id="KW-0457">Lysine biosynthesis</keyword>
<keyword id="KW-0704">Schiff base</keyword>
<dbReference type="EC" id="4.3.3.7" evidence="1"/>
<dbReference type="EMBL" id="CP001131">
    <property type="protein sequence ID" value="ACG75395.1"/>
    <property type="molecule type" value="Genomic_DNA"/>
</dbReference>
<dbReference type="RefSeq" id="WP_012528148.1">
    <property type="nucleotide sequence ID" value="NC_011145.1"/>
</dbReference>
<dbReference type="SMR" id="B4UHY1"/>
<dbReference type="KEGG" id="ank:AnaeK_4192"/>
<dbReference type="HOGENOM" id="CLU_049343_7_1_7"/>
<dbReference type="OrthoDB" id="9782828at2"/>
<dbReference type="UniPathway" id="UPA00034">
    <property type="reaction ID" value="UER00017"/>
</dbReference>
<dbReference type="Proteomes" id="UP000001871">
    <property type="component" value="Chromosome"/>
</dbReference>
<dbReference type="GO" id="GO:0005829">
    <property type="term" value="C:cytosol"/>
    <property type="evidence" value="ECO:0007669"/>
    <property type="project" value="TreeGrafter"/>
</dbReference>
<dbReference type="GO" id="GO:0008840">
    <property type="term" value="F:4-hydroxy-tetrahydrodipicolinate synthase activity"/>
    <property type="evidence" value="ECO:0007669"/>
    <property type="project" value="UniProtKB-UniRule"/>
</dbReference>
<dbReference type="GO" id="GO:0019877">
    <property type="term" value="P:diaminopimelate biosynthetic process"/>
    <property type="evidence" value="ECO:0007669"/>
    <property type="project" value="UniProtKB-UniRule"/>
</dbReference>
<dbReference type="GO" id="GO:0009089">
    <property type="term" value="P:lysine biosynthetic process via diaminopimelate"/>
    <property type="evidence" value="ECO:0007669"/>
    <property type="project" value="UniProtKB-UniRule"/>
</dbReference>
<dbReference type="CDD" id="cd00950">
    <property type="entry name" value="DHDPS"/>
    <property type="match status" value="1"/>
</dbReference>
<dbReference type="Gene3D" id="3.20.20.70">
    <property type="entry name" value="Aldolase class I"/>
    <property type="match status" value="1"/>
</dbReference>
<dbReference type="HAMAP" id="MF_00418">
    <property type="entry name" value="DapA"/>
    <property type="match status" value="1"/>
</dbReference>
<dbReference type="InterPro" id="IPR013785">
    <property type="entry name" value="Aldolase_TIM"/>
</dbReference>
<dbReference type="InterPro" id="IPR005263">
    <property type="entry name" value="DapA"/>
</dbReference>
<dbReference type="InterPro" id="IPR002220">
    <property type="entry name" value="DapA-like"/>
</dbReference>
<dbReference type="InterPro" id="IPR020625">
    <property type="entry name" value="Schiff_base-form_aldolases_AS"/>
</dbReference>
<dbReference type="InterPro" id="IPR020624">
    <property type="entry name" value="Schiff_base-form_aldolases_CS"/>
</dbReference>
<dbReference type="NCBIfam" id="TIGR00674">
    <property type="entry name" value="dapA"/>
    <property type="match status" value="1"/>
</dbReference>
<dbReference type="PANTHER" id="PTHR12128:SF66">
    <property type="entry name" value="4-HYDROXY-2-OXOGLUTARATE ALDOLASE, MITOCHONDRIAL"/>
    <property type="match status" value="1"/>
</dbReference>
<dbReference type="PANTHER" id="PTHR12128">
    <property type="entry name" value="DIHYDRODIPICOLINATE SYNTHASE"/>
    <property type="match status" value="1"/>
</dbReference>
<dbReference type="Pfam" id="PF00701">
    <property type="entry name" value="DHDPS"/>
    <property type="match status" value="1"/>
</dbReference>
<dbReference type="PIRSF" id="PIRSF001365">
    <property type="entry name" value="DHDPS"/>
    <property type="match status" value="1"/>
</dbReference>
<dbReference type="PRINTS" id="PR00146">
    <property type="entry name" value="DHPICSNTHASE"/>
</dbReference>
<dbReference type="SMART" id="SM01130">
    <property type="entry name" value="DHDPS"/>
    <property type="match status" value="1"/>
</dbReference>
<dbReference type="SUPFAM" id="SSF51569">
    <property type="entry name" value="Aldolase"/>
    <property type="match status" value="1"/>
</dbReference>
<dbReference type="PROSITE" id="PS00665">
    <property type="entry name" value="DHDPS_1"/>
    <property type="match status" value="1"/>
</dbReference>
<dbReference type="PROSITE" id="PS00666">
    <property type="entry name" value="DHDPS_2"/>
    <property type="match status" value="1"/>
</dbReference>
<proteinExistence type="inferred from homology"/>
<organism>
    <name type="scientific">Anaeromyxobacter sp. (strain K)</name>
    <dbReference type="NCBI Taxonomy" id="447217"/>
    <lineage>
        <taxon>Bacteria</taxon>
        <taxon>Pseudomonadati</taxon>
        <taxon>Myxococcota</taxon>
        <taxon>Myxococcia</taxon>
        <taxon>Myxococcales</taxon>
        <taxon>Cystobacterineae</taxon>
        <taxon>Anaeromyxobacteraceae</taxon>
        <taxon>Anaeromyxobacter</taxon>
    </lineage>
</organism>
<accession>B4UHY1</accession>
<feature type="chain" id="PRO_1000124016" description="4-hydroxy-tetrahydrodipicolinate synthase">
    <location>
        <begin position="1"/>
        <end position="295"/>
    </location>
</feature>
<feature type="active site" description="Proton donor/acceptor" evidence="1">
    <location>
        <position position="134"/>
    </location>
</feature>
<feature type="active site" description="Schiff-base intermediate with substrate" evidence="1">
    <location>
        <position position="162"/>
    </location>
</feature>
<feature type="binding site" evidence="1">
    <location>
        <position position="46"/>
    </location>
    <ligand>
        <name>pyruvate</name>
        <dbReference type="ChEBI" id="CHEBI:15361"/>
    </ligand>
</feature>
<feature type="binding site" evidence="1">
    <location>
        <position position="205"/>
    </location>
    <ligand>
        <name>pyruvate</name>
        <dbReference type="ChEBI" id="CHEBI:15361"/>
    </ligand>
</feature>
<feature type="site" description="Part of a proton relay during catalysis" evidence="1">
    <location>
        <position position="45"/>
    </location>
</feature>
<feature type="site" description="Part of a proton relay during catalysis" evidence="1">
    <location>
        <position position="108"/>
    </location>
</feature>
<comment type="function">
    <text evidence="1">Catalyzes the condensation of (S)-aspartate-beta-semialdehyde [(S)-ASA] and pyruvate to 4-hydroxy-tetrahydrodipicolinate (HTPA).</text>
</comment>
<comment type="catalytic activity">
    <reaction evidence="1">
        <text>L-aspartate 4-semialdehyde + pyruvate = (2S,4S)-4-hydroxy-2,3,4,5-tetrahydrodipicolinate + H2O + H(+)</text>
        <dbReference type="Rhea" id="RHEA:34171"/>
        <dbReference type="ChEBI" id="CHEBI:15361"/>
        <dbReference type="ChEBI" id="CHEBI:15377"/>
        <dbReference type="ChEBI" id="CHEBI:15378"/>
        <dbReference type="ChEBI" id="CHEBI:67139"/>
        <dbReference type="ChEBI" id="CHEBI:537519"/>
        <dbReference type="EC" id="4.3.3.7"/>
    </reaction>
</comment>
<comment type="pathway">
    <text evidence="1">Amino-acid biosynthesis; L-lysine biosynthesis via DAP pathway; (S)-tetrahydrodipicolinate from L-aspartate: step 3/4.</text>
</comment>
<comment type="subunit">
    <text evidence="1">Homotetramer; dimer of dimers.</text>
</comment>
<comment type="subcellular location">
    <subcellularLocation>
        <location evidence="1">Cytoplasm</location>
    </subcellularLocation>
</comment>
<comment type="similarity">
    <text evidence="1">Belongs to the DapA family.</text>
</comment>
<comment type="caution">
    <text evidence="2">Was originally thought to be a dihydrodipicolinate synthase (DHDPS), catalyzing the condensation of (S)-aspartate-beta-semialdehyde [(S)-ASA] and pyruvate to dihydrodipicolinate (DHDP). However, it was shown in E.coli that the product of the enzymatic reaction is not dihydrodipicolinate but in fact (4S)-4-hydroxy-2,3,4,5-tetrahydro-(2S)-dipicolinic acid (HTPA), and that the consecutive dehydration reaction leading to DHDP is not spontaneous but catalyzed by DapB.</text>
</comment>
<name>DAPA_ANASK</name>
<gene>
    <name evidence="1" type="primary">dapA</name>
    <name type="ordered locus">AnaeK_4192</name>
</gene>